<organism>
    <name type="scientific">Beutenbergia cavernae (strain ATCC BAA-8 / DSM 12333 / CCUG 43141 / JCM 11478 / NBRC 16432 / NCIMB 13614 / HKI 0122)</name>
    <dbReference type="NCBI Taxonomy" id="471853"/>
    <lineage>
        <taxon>Bacteria</taxon>
        <taxon>Bacillati</taxon>
        <taxon>Actinomycetota</taxon>
        <taxon>Actinomycetes</taxon>
        <taxon>Micrococcales</taxon>
        <taxon>Beutenbergiaceae</taxon>
        <taxon>Beutenbergia</taxon>
    </lineage>
</organism>
<keyword id="KW-0963">Cytoplasm</keyword>
<keyword id="KW-0251">Elongation factor</keyword>
<keyword id="KW-0342">GTP-binding</keyword>
<keyword id="KW-0547">Nucleotide-binding</keyword>
<keyword id="KW-0648">Protein biosynthesis</keyword>
<keyword id="KW-1185">Reference proteome</keyword>
<comment type="function">
    <text evidence="1">Catalyzes the GTP-dependent ribosomal translocation step during translation elongation. During this step, the ribosome changes from the pre-translocational (PRE) to the post-translocational (POST) state as the newly formed A-site-bound peptidyl-tRNA and P-site-bound deacylated tRNA move to the P and E sites, respectively. Catalyzes the coordinated movement of the two tRNA molecules, the mRNA and conformational changes in the ribosome.</text>
</comment>
<comment type="subcellular location">
    <subcellularLocation>
        <location evidence="1">Cytoplasm</location>
    </subcellularLocation>
</comment>
<comment type="similarity">
    <text evidence="1">Belongs to the TRAFAC class translation factor GTPase superfamily. Classic translation factor GTPase family. EF-G/EF-2 subfamily.</text>
</comment>
<feature type="chain" id="PRO_1000202296" description="Elongation factor G">
    <location>
        <begin position="1"/>
        <end position="704"/>
    </location>
</feature>
<feature type="domain" description="tr-type G">
    <location>
        <begin position="10"/>
        <end position="290"/>
    </location>
</feature>
<feature type="binding site" evidence="1">
    <location>
        <begin position="19"/>
        <end position="26"/>
    </location>
    <ligand>
        <name>GTP</name>
        <dbReference type="ChEBI" id="CHEBI:37565"/>
    </ligand>
</feature>
<feature type="binding site" evidence="1">
    <location>
        <begin position="83"/>
        <end position="87"/>
    </location>
    <ligand>
        <name>GTP</name>
        <dbReference type="ChEBI" id="CHEBI:37565"/>
    </ligand>
</feature>
<feature type="binding site" evidence="1">
    <location>
        <begin position="137"/>
        <end position="140"/>
    </location>
    <ligand>
        <name>GTP</name>
        <dbReference type="ChEBI" id="CHEBI:37565"/>
    </ligand>
</feature>
<proteinExistence type="inferred from homology"/>
<reference key="1">
    <citation type="journal article" date="2009" name="Stand. Genomic Sci.">
        <title>Complete genome sequence of Beutenbergia cavernae type strain (HKI 0122).</title>
        <authorList>
            <person name="Land M."/>
            <person name="Pukall R."/>
            <person name="Abt B."/>
            <person name="Goker M."/>
            <person name="Rohde M."/>
            <person name="Glavina Del Rio T."/>
            <person name="Tice H."/>
            <person name="Copeland A."/>
            <person name="Cheng J.F."/>
            <person name="Lucas S."/>
            <person name="Chen F."/>
            <person name="Nolan M."/>
            <person name="Bruce D."/>
            <person name="Goodwin L."/>
            <person name="Pitluck S."/>
            <person name="Ivanova N."/>
            <person name="Mavromatis K."/>
            <person name="Ovchinnikova G."/>
            <person name="Pati A."/>
            <person name="Chen A."/>
            <person name="Palaniappan K."/>
            <person name="Hauser L."/>
            <person name="Chang Y.J."/>
            <person name="Jefferies C.C."/>
            <person name="Saunders E."/>
            <person name="Brettin T."/>
            <person name="Detter J.C."/>
            <person name="Han C."/>
            <person name="Chain P."/>
            <person name="Bristow J."/>
            <person name="Eisen J.A."/>
            <person name="Markowitz V."/>
            <person name="Hugenholtz P."/>
            <person name="Kyrpides N.C."/>
            <person name="Klenk H.P."/>
            <person name="Lapidus A."/>
        </authorList>
    </citation>
    <scope>NUCLEOTIDE SEQUENCE [LARGE SCALE GENOMIC DNA]</scope>
    <source>
        <strain>ATCC BAA-8 / DSM 12333 / CCUG 43141 / JCM 11478 / NBRC 16432 / NCIMB 13614 / HKI 0122</strain>
    </source>
</reference>
<gene>
    <name evidence="1" type="primary">fusA</name>
    <name type="ordered locus">Bcav_3146</name>
</gene>
<sequence length="704" mass="77613">MALDVLTDLTKVRNIGIMAHIDAGKTTTTERILFYTGVNYKIGETHDGASTTDWMEQEQERGITITSAAVTCFWNGTQINIIDTPGHVDFTVEVERSLRVLDGAVAVFDGKEGVEPQSETVWRQADKYDVPRICFVNKMDKLGADFYFTVDTIVGRLGARPLVLQLPIGAENDFIGVVDLVEMRALVWPADSKGDTTMGAKYEVQEIPADLREKADEYRAKLIETVAETDDALLEKFFAGEELTVAEIKAGIRKLTVASEIYPVLCGSAFKNRGVQPMLDAVVDYLPSPLDVPAVEGHSVKDEEETITRAPDSSAPFAALAYKIATHPFFGKLIYVRVYSGKVTPGTQVINATKGKKERIGKLFQMHANKENPVDEATAGHIYAFIGLKDVTTGDTLSDIANPVVLESMTFPDPVIEVAIEPKTKGDQEKLSTAIQKLAEEDPTFQVMLDQETGQTVIKGMGELHLDILVDRMRREFKVEANVGKPQVAYRETIRRKVEKVEYVHKKQTGGSGQFAKVQMTFEPLDTAEGELYEFVNSVTGGRIPREYIPSVDHGIQDAMQAGVLAGYPLVGVKATLLDGAYHEVDSSEMAFKIAGSMVLKEGVRRADPVLLEPLMDVEVRTPEEYMGDVIGDLNSRRGHIQSMQDASGVKVVRALVPLSELFGYIGDLRSKTQGRAVYSMQFDSYAEVPRNVAEEIIKKTRGE</sequence>
<accession>C5C0J4</accession>
<evidence type="ECO:0000255" key="1">
    <source>
        <dbReference type="HAMAP-Rule" id="MF_00054"/>
    </source>
</evidence>
<dbReference type="EMBL" id="CP001618">
    <property type="protein sequence ID" value="ACQ81390.1"/>
    <property type="molecule type" value="Genomic_DNA"/>
</dbReference>
<dbReference type="RefSeq" id="WP_015883630.1">
    <property type="nucleotide sequence ID" value="NC_012669.1"/>
</dbReference>
<dbReference type="SMR" id="C5C0J4"/>
<dbReference type="STRING" id="471853.Bcav_3146"/>
<dbReference type="KEGG" id="bcv:Bcav_3146"/>
<dbReference type="eggNOG" id="COG0480">
    <property type="taxonomic scope" value="Bacteria"/>
</dbReference>
<dbReference type="HOGENOM" id="CLU_002794_4_1_11"/>
<dbReference type="OrthoDB" id="9801472at2"/>
<dbReference type="Proteomes" id="UP000007962">
    <property type="component" value="Chromosome"/>
</dbReference>
<dbReference type="GO" id="GO:0005737">
    <property type="term" value="C:cytoplasm"/>
    <property type="evidence" value="ECO:0007669"/>
    <property type="project" value="UniProtKB-SubCell"/>
</dbReference>
<dbReference type="GO" id="GO:0005525">
    <property type="term" value="F:GTP binding"/>
    <property type="evidence" value="ECO:0007669"/>
    <property type="project" value="UniProtKB-UniRule"/>
</dbReference>
<dbReference type="GO" id="GO:0003924">
    <property type="term" value="F:GTPase activity"/>
    <property type="evidence" value="ECO:0007669"/>
    <property type="project" value="InterPro"/>
</dbReference>
<dbReference type="GO" id="GO:0003746">
    <property type="term" value="F:translation elongation factor activity"/>
    <property type="evidence" value="ECO:0007669"/>
    <property type="project" value="UniProtKB-UniRule"/>
</dbReference>
<dbReference type="GO" id="GO:0032790">
    <property type="term" value="P:ribosome disassembly"/>
    <property type="evidence" value="ECO:0007669"/>
    <property type="project" value="TreeGrafter"/>
</dbReference>
<dbReference type="CDD" id="cd01886">
    <property type="entry name" value="EF-G"/>
    <property type="match status" value="1"/>
</dbReference>
<dbReference type="CDD" id="cd16262">
    <property type="entry name" value="EFG_III"/>
    <property type="match status" value="1"/>
</dbReference>
<dbReference type="CDD" id="cd01434">
    <property type="entry name" value="EFG_mtEFG1_IV"/>
    <property type="match status" value="1"/>
</dbReference>
<dbReference type="CDD" id="cd03713">
    <property type="entry name" value="EFG_mtEFG_C"/>
    <property type="match status" value="1"/>
</dbReference>
<dbReference type="CDD" id="cd04088">
    <property type="entry name" value="EFG_mtEFG_II"/>
    <property type="match status" value="1"/>
</dbReference>
<dbReference type="FunFam" id="2.40.30.10:FF:000006">
    <property type="entry name" value="Elongation factor G"/>
    <property type="match status" value="1"/>
</dbReference>
<dbReference type="FunFam" id="3.30.230.10:FF:000003">
    <property type="entry name" value="Elongation factor G"/>
    <property type="match status" value="1"/>
</dbReference>
<dbReference type="FunFam" id="3.30.70.240:FF:000001">
    <property type="entry name" value="Elongation factor G"/>
    <property type="match status" value="1"/>
</dbReference>
<dbReference type="FunFam" id="3.30.70.870:FF:000001">
    <property type="entry name" value="Elongation factor G"/>
    <property type="match status" value="1"/>
</dbReference>
<dbReference type="FunFam" id="3.40.50.300:FF:000029">
    <property type="entry name" value="Elongation factor G"/>
    <property type="match status" value="1"/>
</dbReference>
<dbReference type="Gene3D" id="3.30.230.10">
    <property type="match status" value="1"/>
</dbReference>
<dbReference type="Gene3D" id="3.30.70.240">
    <property type="match status" value="1"/>
</dbReference>
<dbReference type="Gene3D" id="3.30.70.870">
    <property type="entry name" value="Elongation Factor G (Translational Gtpase), domain 3"/>
    <property type="match status" value="1"/>
</dbReference>
<dbReference type="Gene3D" id="3.40.50.300">
    <property type="entry name" value="P-loop containing nucleotide triphosphate hydrolases"/>
    <property type="match status" value="1"/>
</dbReference>
<dbReference type="Gene3D" id="2.40.30.10">
    <property type="entry name" value="Translation factors"/>
    <property type="match status" value="1"/>
</dbReference>
<dbReference type="HAMAP" id="MF_00054_B">
    <property type="entry name" value="EF_G_EF_2_B"/>
    <property type="match status" value="1"/>
</dbReference>
<dbReference type="InterPro" id="IPR041095">
    <property type="entry name" value="EFG_II"/>
</dbReference>
<dbReference type="InterPro" id="IPR009022">
    <property type="entry name" value="EFG_III"/>
</dbReference>
<dbReference type="InterPro" id="IPR035647">
    <property type="entry name" value="EFG_III/V"/>
</dbReference>
<dbReference type="InterPro" id="IPR047872">
    <property type="entry name" value="EFG_IV"/>
</dbReference>
<dbReference type="InterPro" id="IPR035649">
    <property type="entry name" value="EFG_V"/>
</dbReference>
<dbReference type="InterPro" id="IPR000640">
    <property type="entry name" value="EFG_V-like"/>
</dbReference>
<dbReference type="InterPro" id="IPR004161">
    <property type="entry name" value="EFTu-like_2"/>
</dbReference>
<dbReference type="InterPro" id="IPR031157">
    <property type="entry name" value="G_TR_CS"/>
</dbReference>
<dbReference type="InterPro" id="IPR027417">
    <property type="entry name" value="P-loop_NTPase"/>
</dbReference>
<dbReference type="InterPro" id="IPR020568">
    <property type="entry name" value="Ribosomal_Su5_D2-typ_SF"/>
</dbReference>
<dbReference type="InterPro" id="IPR014721">
    <property type="entry name" value="Ribsml_uS5_D2-typ_fold_subgr"/>
</dbReference>
<dbReference type="InterPro" id="IPR005225">
    <property type="entry name" value="Small_GTP-bd"/>
</dbReference>
<dbReference type="InterPro" id="IPR000795">
    <property type="entry name" value="T_Tr_GTP-bd_dom"/>
</dbReference>
<dbReference type="InterPro" id="IPR009000">
    <property type="entry name" value="Transl_B-barrel_sf"/>
</dbReference>
<dbReference type="InterPro" id="IPR004540">
    <property type="entry name" value="Transl_elong_EFG/EF2"/>
</dbReference>
<dbReference type="InterPro" id="IPR005517">
    <property type="entry name" value="Transl_elong_EFG/EF2_IV"/>
</dbReference>
<dbReference type="NCBIfam" id="TIGR00484">
    <property type="entry name" value="EF-G"/>
    <property type="match status" value="1"/>
</dbReference>
<dbReference type="NCBIfam" id="NF009379">
    <property type="entry name" value="PRK12740.1-3"/>
    <property type="match status" value="1"/>
</dbReference>
<dbReference type="NCBIfam" id="NF009381">
    <property type="entry name" value="PRK12740.1-5"/>
    <property type="match status" value="1"/>
</dbReference>
<dbReference type="NCBIfam" id="TIGR00231">
    <property type="entry name" value="small_GTP"/>
    <property type="match status" value="1"/>
</dbReference>
<dbReference type="PANTHER" id="PTHR43261:SF1">
    <property type="entry name" value="RIBOSOME-RELEASING FACTOR 2, MITOCHONDRIAL"/>
    <property type="match status" value="1"/>
</dbReference>
<dbReference type="PANTHER" id="PTHR43261">
    <property type="entry name" value="TRANSLATION ELONGATION FACTOR G-RELATED"/>
    <property type="match status" value="1"/>
</dbReference>
<dbReference type="Pfam" id="PF00679">
    <property type="entry name" value="EFG_C"/>
    <property type="match status" value="1"/>
</dbReference>
<dbReference type="Pfam" id="PF14492">
    <property type="entry name" value="EFG_III"/>
    <property type="match status" value="1"/>
</dbReference>
<dbReference type="Pfam" id="PF03764">
    <property type="entry name" value="EFG_IV"/>
    <property type="match status" value="1"/>
</dbReference>
<dbReference type="Pfam" id="PF00009">
    <property type="entry name" value="GTP_EFTU"/>
    <property type="match status" value="1"/>
</dbReference>
<dbReference type="Pfam" id="PF03144">
    <property type="entry name" value="GTP_EFTU_D2"/>
    <property type="match status" value="1"/>
</dbReference>
<dbReference type="PRINTS" id="PR00315">
    <property type="entry name" value="ELONGATNFCT"/>
</dbReference>
<dbReference type="SMART" id="SM00838">
    <property type="entry name" value="EFG_C"/>
    <property type="match status" value="1"/>
</dbReference>
<dbReference type="SMART" id="SM00889">
    <property type="entry name" value="EFG_IV"/>
    <property type="match status" value="1"/>
</dbReference>
<dbReference type="SUPFAM" id="SSF54980">
    <property type="entry name" value="EF-G C-terminal domain-like"/>
    <property type="match status" value="2"/>
</dbReference>
<dbReference type="SUPFAM" id="SSF52540">
    <property type="entry name" value="P-loop containing nucleoside triphosphate hydrolases"/>
    <property type="match status" value="1"/>
</dbReference>
<dbReference type="SUPFAM" id="SSF54211">
    <property type="entry name" value="Ribosomal protein S5 domain 2-like"/>
    <property type="match status" value="1"/>
</dbReference>
<dbReference type="SUPFAM" id="SSF50447">
    <property type="entry name" value="Translation proteins"/>
    <property type="match status" value="1"/>
</dbReference>
<dbReference type="PROSITE" id="PS00301">
    <property type="entry name" value="G_TR_1"/>
    <property type="match status" value="1"/>
</dbReference>
<dbReference type="PROSITE" id="PS51722">
    <property type="entry name" value="G_TR_2"/>
    <property type="match status" value="1"/>
</dbReference>
<protein>
    <recommendedName>
        <fullName evidence="1">Elongation factor G</fullName>
        <shortName evidence="1">EF-G</shortName>
    </recommendedName>
</protein>
<name>EFG_BEUC1</name>